<name>Y2443_STAEQ</name>
<sequence length="253" mass="29629">MRYLKKVTIYISLLILVSGCGNGKETEIKQNFNKMLDMYPTKNLEDFYDKEGYRDEEFDKKDKGTWIVGSTMTIEPKGKYMESRGMFLYINRNTRTTKGYYYVRKTTDDSKGRLKDDEKRYPVKMEHNKIIPTKPIPNDKLKKEIENFKFFVQYGDFKNLKDYKDGDISYNPNVPSYSAKYQLSNNDYNVKQLRKRYDIPTNQAPKLLLKGDGDLKGSSIGSKSLEFTFIENKEENIFFSDGVQFTPSEDSES</sequence>
<reference key="1">
    <citation type="journal article" date="2005" name="J. Bacteriol.">
        <title>Insights on evolution of virulence and resistance from the complete genome analysis of an early methicillin-resistant Staphylococcus aureus strain and a biofilm-producing methicillin-resistant Staphylococcus epidermidis strain.</title>
        <authorList>
            <person name="Gill S.R."/>
            <person name="Fouts D.E."/>
            <person name="Archer G.L."/>
            <person name="Mongodin E.F."/>
            <person name="DeBoy R.T."/>
            <person name="Ravel J."/>
            <person name="Paulsen I.T."/>
            <person name="Kolonay J.F."/>
            <person name="Brinkac L.M."/>
            <person name="Beanan M.J."/>
            <person name="Dodson R.J."/>
            <person name="Daugherty S.C."/>
            <person name="Madupu R."/>
            <person name="Angiuoli S.V."/>
            <person name="Durkin A.S."/>
            <person name="Haft D.H."/>
            <person name="Vamathevan J.J."/>
            <person name="Khouri H."/>
            <person name="Utterback T.R."/>
            <person name="Lee C."/>
            <person name="Dimitrov G."/>
            <person name="Jiang L."/>
            <person name="Qin H."/>
            <person name="Weidman J."/>
            <person name="Tran K."/>
            <person name="Kang K.H."/>
            <person name="Hance I.R."/>
            <person name="Nelson K.E."/>
            <person name="Fraser C.M."/>
        </authorList>
    </citation>
    <scope>NUCLEOTIDE SEQUENCE [LARGE SCALE GENOMIC DNA]</scope>
    <source>
        <strain>ATCC 35984 / DSM 28319 / BCRC 17069 / CCUG 31568 / BM 3577 / RP62A</strain>
    </source>
</reference>
<dbReference type="EMBL" id="CP000029">
    <property type="protein sequence ID" value="AAW53306.1"/>
    <property type="molecule type" value="Genomic_DNA"/>
</dbReference>
<dbReference type="RefSeq" id="WP_002486032.1">
    <property type="nucleotide sequence ID" value="NC_002976.3"/>
</dbReference>
<dbReference type="SMR" id="Q5HKA6"/>
<dbReference type="STRING" id="176279.SERP2443"/>
<dbReference type="KEGG" id="ser:SERP2443"/>
<dbReference type="eggNOG" id="ENOG5033UD8">
    <property type="taxonomic scope" value="Bacteria"/>
</dbReference>
<dbReference type="HOGENOM" id="CLU_071589_0_1_9"/>
<dbReference type="Proteomes" id="UP000000531">
    <property type="component" value="Chromosome"/>
</dbReference>
<dbReference type="GO" id="GO:0005886">
    <property type="term" value="C:plasma membrane"/>
    <property type="evidence" value="ECO:0007669"/>
    <property type="project" value="UniProtKB-SubCell"/>
</dbReference>
<dbReference type="Gene3D" id="2.50.20.40">
    <property type="match status" value="1"/>
</dbReference>
<dbReference type="InterPro" id="IPR007595">
    <property type="entry name" value="Csa"/>
</dbReference>
<dbReference type="InterPro" id="IPR038641">
    <property type="entry name" value="Csa_sf"/>
</dbReference>
<dbReference type="NCBIfam" id="TIGR01742">
    <property type="entry name" value="SA_tandem_lipo"/>
    <property type="match status" value="1"/>
</dbReference>
<dbReference type="Pfam" id="PF04507">
    <property type="entry name" value="DUF576"/>
    <property type="match status" value="1"/>
</dbReference>
<dbReference type="PROSITE" id="PS51257">
    <property type="entry name" value="PROKAR_LIPOPROTEIN"/>
    <property type="match status" value="1"/>
</dbReference>
<keyword id="KW-1003">Cell membrane</keyword>
<keyword id="KW-0449">Lipoprotein</keyword>
<keyword id="KW-0472">Membrane</keyword>
<keyword id="KW-0564">Palmitate</keyword>
<keyword id="KW-1185">Reference proteome</keyword>
<keyword id="KW-0732">Signal</keyword>
<comment type="subcellular location">
    <subcellularLocation>
        <location evidence="1">Cell membrane</location>
        <topology evidence="1">Lipid-anchor</topology>
    </subcellularLocation>
</comment>
<comment type="similarity">
    <text evidence="2">Belongs to the staphylococcal tandem lipoprotein family.</text>
</comment>
<accession>Q5HKA6</accession>
<protein>
    <recommendedName>
        <fullName>Uncharacterized lipoprotein SERP2443</fullName>
    </recommendedName>
</protein>
<organism>
    <name type="scientific">Staphylococcus epidermidis (strain ATCC 35984 / DSM 28319 / BCRC 17069 / CCUG 31568 / BM 3577 / RP62A)</name>
    <dbReference type="NCBI Taxonomy" id="176279"/>
    <lineage>
        <taxon>Bacteria</taxon>
        <taxon>Bacillati</taxon>
        <taxon>Bacillota</taxon>
        <taxon>Bacilli</taxon>
        <taxon>Bacillales</taxon>
        <taxon>Staphylococcaceae</taxon>
        <taxon>Staphylococcus</taxon>
    </lineage>
</organism>
<feature type="signal peptide" evidence="1">
    <location>
        <begin position="1"/>
        <end position="19"/>
    </location>
</feature>
<feature type="chain" id="PRO_0000282185" description="Uncharacterized lipoprotein SERP2443">
    <location>
        <begin position="20"/>
        <end position="253"/>
    </location>
</feature>
<feature type="lipid moiety-binding region" description="N-palmitoyl cysteine" evidence="1">
    <location>
        <position position="20"/>
    </location>
</feature>
<feature type="lipid moiety-binding region" description="S-diacylglycerol cysteine" evidence="1">
    <location>
        <position position="20"/>
    </location>
</feature>
<evidence type="ECO:0000255" key="1">
    <source>
        <dbReference type="PROSITE-ProRule" id="PRU00303"/>
    </source>
</evidence>
<evidence type="ECO:0000305" key="2"/>
<proteinExistence type="inferred from homology"/>
<gene>
    <name type="ordered locus">SERP2443</name>
</gene>